<name>EFTS_MYCSJ</name>
<keyword id="KW-0963">Cytoplasm</keyword>
<keyword id="KW-0251">Elongation factor</keyword>
<keyword id="KW-0648">Protein biosynthesis</keyword>
<reference key="1">
    <citation type="submission" date="2007-02" db="EMBL/GenBank/DDBJ databases">
        <title>Complete sequence of Mycobacterium sp. JLS.</title>
        <authorList>
            <consortium name="US DOE Joint Genome Institute"/>
            <person name="Copeland A."/>
            <person name="Lucas S."/>
            <person name="Lapidus A."/>
            <person name="Barry K."/>
            <person name="Detter J.C."/>
            <person name="Glavina del Rio T."/>
            <person name="Hammon N."/>
            <person name="Israni S."/>
            <person name="Dalin E."/>
            <person name="Tice H."/>
            <person name="Pitluck S."/>
            <person name="Chain P."/>
            <person name="Malfatti S."/>
            <person name="Shin M."/>
            <person name="Vergez L."/>
            <person name="Schmutz J."/>
            <person name="Larimer F."/>
            <person name="Land M."/>
            <person name="Hauser L."/>
            <person name="Kyrpides N."/>
            <person name="Mikhailova N."/>
            <person name="Miller C.D."/>
            <person name="Anderson A.J."/>
            <person name="Sims R.C."/>
            <person name="Richardson P."/>
        </authorList>
    </citation>
    <scope>NUCLEOTIDE SEQUENCE [LARGE SCALE GENOMIC DNA]</scope>
    <source>
        <strain>JLS</strain>
    </source>
</reference>
<dbReference type="EMBL" id="CP000580">
    <property type="protein sequence ID" value="ABN97762.1"/>
    <property type="molecule type" value="Genomic_DNA"/>
</dbReference>
<dbReference type="SMR" id="A3PXY5"/>
<dbReference type="KEGG" id="mjl:Mjls_1975"/>
<dbReference type="HOGENOM" id="CLU_047155_0_0_11"/>
<dbReference type="BioCyc" id="MSP164757:G1G8C-1995-MONOMER"/>
<dbReference type="GO" id="GO:0005737">
    <property type="term" value="C:cytoplasm"/>
    <property type="evidence" value="ECO:0007669"/>
    <property type="project" value="UniProtKB-SubCell"/>
</dbReference>
<dbReference type="GO" id="GO:0003746">
    <property type="term" value="F:translation elongation factor activity"/>
    <property type="evidence" value="ECO:0007669"/>
    <property type="project" value="UniProtKB-UniRule"/>
</dbReference>
<dbReference type="CDD" id="cd14275">
    <property type="entry name" value="UBA_EF-Ts"/>
    <property type="match status" value="1"/>
</dbReference>
<dbReference type="FunFam" id="1.10.286.20:FF:000001">
    <property type="entry name" value="Elongation factor Ts"/>
    <property type="match status" value="1"/>
</dbReference>
<dbReference type="FunFam" id="1.10.8.10:FF:000001">
    <property type="entry name" value="Elongation factor Ts"/>
    <property type="match status" value="1"/>
</dbReference>
<dbReference type="Gene3D" id="1.10.286.20">
    <property type="match status" value="1"/>
</dbReference>
<dbReference type="Gene3D" id="1.10.8.10">
    <property type="entry name" value="DNA helicase RuvA subunit, C-terminal domain"/>
    <property type="match status" value="1"/>
</dbReference>
<dbReference type="Gene3D" id="3.30.479.20">
    <property type="entry name" value="Elongation factor Ts, dimerisation domain"/>
    <property type="match status" value="2"/>
</dbReference>
<dbReference type="HAMAP" id="MF_00050">
    <property type="entry name" value="EF_Ts"/>
    <property type="match status" value="1"/>
</dbReference>
<dbReference type="InterPro" id="IPR036402">
    <property type="entry name" value="EF-Ts_dimer_sf"/>
</dbReference>
<dbReference type="InterPro" id="IPR001816">
    <property type="entry name" value="Transl_elong_EFTs/EF1B"/>
</dbReference>
<dbReference type="InterPro" id="IPR014039">
    <property type="entry name" value="Transl_elong_EFTs/EF1B_dimer"/>
</dbReference>
<dbReference type="InterPro" id="IPR018101">
    <property type="entry name" value="Transl_elong_Ts_CS"/>
</dbReference>
<dbReference type="InterPro" id="IPR009060">
    <property type="entry name" value="UBA-like_sf"/>
</dbReference>
<dbReference type="NCBIfam" id="TIGR00116">
    <property type="entry name" value="tsf"/>
    <property type="match status" value="1"/>
</dbReference>
<dbReference type="PANTHER" id="PTHR11741">
    <property type="entry name" value="ELONGATION FACTOR TS"/>
    <property type="match status" value="1"/>
</dbReference>
<dbReference type="PANTHER" id="PTHR11741:SF0">
    <property type="entry name" value="ELONGATION FACTOR TS, MITOCHONDRIAL"/>
    <property type="match status" value="1"/>
</dbReference>
<dbReference type="Pfam" id="PF00889">
    <property type="entry name" value="EF_TS"/>
    <property type="match status" value="1"/>
</dbReference>
<dbReference type="SUPFAM" id="SSF54713">
    <property type="entry name" value="Elongation factor Ts (EF-Ts), dimerisation domain"/>
    <property type="match status" value="1"/>
</dbReference>
<dbReference type="SUPFAM" id="SSF46934">
    <property type="entry name" value="UBA-like"/>
    <property type="match status" value="1"/>
</dbReference>
<dbReference type="PROSITE" id="PS01126">
    <property type="entry name" value="EF_TS_1"/>
    <property type="match status" value="1"/>
</dbReference>
<dbReference type="PROSITE" id="PS01127">
    <property type="entry name" value="EF_TS_2"/>
    <property type="match status" value="1"/>
</dbReference>
<proteinExistence type="inferred from homology"/>
<evidence type="ECO:0000255" key="1">
    <source>
        <dbReference type="HAMAP-Rule" id="MF_00050"/>
    </source>
</evidence>
<sequence>MANYTAADVKRLRELTGAGMMASKNALVEADGDFDKAVELLRIKGAKDVGKRAERATAEGLVAAKDGALIELNSETDFVAKNAEFQSVADQIVAAAAAAKATDIDALKAAKVGDTTVEQVIADLSAKIGEKLELRRVAYFDGNVETYLHKRAADLPPAVGVLVEYTGDGENGTEAAHAVALQIAALKAKYLTREDVPEDVVANERRIAEETARNEGKPEQALPKIVEGRVTGFYKDVVLLDQPSVSDNKKTVKALLDEAGVTVTRFVRFEVGQA</sequence>
<gene>
    <name evidence="1" type="primary">tsf</name>
    <name type="ordered locus">Mjls_1975</name>
</gene>
<feature type="chain" id="PRO_1000006129" description="Elongation factor Ts">
    <location>
        <begin position="1"/>
        <end position="274"/>
    </location>
</feature>
<feature type="region of interest" description="Involved in Mg(2+) ion dislocation from EF-Tu" evidence="1">
    <location>
        <begin position="76"/>
        <end position="79"/>
    </location>
</feature>
<comment type="function">
    <text evidence="1">Associates with the EF-Tu.GDP complex and induces the exchange of GDP to GTP. It remains bound to the aminoacyl-tRNA.EF-Tu.GTP complex up to the GTP hydrolysis stage on the ribosome.</text>
</comment>
<comment type="subcellular location">
    <subcellularLocation>
        <location evidence="1">Cytoplasm</location>
    </subcellularLocation>
</comment>
<comment type="similarity">
    <text evidence="1">Belongs to the EF-Ts family.</text>
</comment>
<accession>A3PXY5</accession>
<protein>
    <recommendedName>
        <fullName evidence="1">Elongation factor Ts</fullName>
        <shortName evidence="1">EF-Ts</shortName>
    </recommendedName>
</protein>
<organism>
    <name type="scientific">Mycobacterium sp. (strain JLS)</name>
    <dbReference type="NCBI Taxonomy" id="164757"/>
    <lineage>
        <taxon>Bacteria</taxon>
        <taxon>Bacillati</taxon>
        <taxon>Actinomycetota</taxon>
        <taxon>Actinomycetes</taxon>
        <taxon>Mycobacteriales</taxon>
        <taxon>Mycobacteriaceae</taxon>
        <taxon>Mycobacterium</taxon>
    </lineage>
</organism>